<sequence>MNPPINFLPWRQQRRTAFLRFWLLMFVAPLLLAVGITLILRLTGSAEARIDAVLLQAEQQLARSLQITKPRLLEQQQLREQRSQRQRQRQFTRDWQSALEALAALLPEHAWLTTISWQQGTLEIKGLTTSITALNALETSLRQDASFHLNQRGATQQDAQGRWQFEYQLTRKVSDEHVL</sequence>
<protein>
    <recommendedName>
        <fullName>DNA utilization protein HofN</fullName>
    </recommendedName>
</protein>
<evidence type="ECO:0000255" key="1"/>
<evidence type="ECO:0000269" key="2">
    <source>
    </source>
</evidence>
<evidence type="ECO:0000305" key="3"/>
<gene>
    <name type="primary">hofN</name>
    <name type="synonym">yrfC</name>
    <name type="ordered locus">b3394</name>
    <name type="ordered locus">JW3357</name>
</gene>
<proteinExistence type="predicted"/>
<reference key="1">
    <citation type="journal article" date="1997" name="Science">
        <title>The complete genome sequence of Escherichia coli K-12.</title>
        <authorList>
            <person name="Blattner F.R."/>
            <person name="Plunkett G. III"/>
            <person name="Bloch C.A."/>
            <person name="Perna N.T."/>
            <person name="Burland V."/>
            <person name="Riley M."/>
            <person name="Collado-Vides J."/>
            <person name="Glasner J.D."/>
            <person name="Rode C.K."/>
            <person name="Mayhew G.F."/>
            <person name="Gregor J."/>
            <person name="Davis N.W."/>
            <person name="Kirkpatrick H.A."/>
            <person name="Goeden M.A."/>
            <person name="Rose D.J."/>
            <person name="Mau B."/>
            <person name="Shao Y."/>
        </authorList>
    </citation>
    <scope>NUCLEOTIDE SEQUENCE [LARGE SCALE GENOMIC DNA]</scope>
    <source>
        <strain>K12 / MG1655 / ATCC 47076</strain>
    </source>
</reference>
<reference key="2">
    <citation type="journal article" date="2006" name="Mol. Syst. Biol.">
        <title>Highly accurate genome sequences of Escherichia coli K-12 strains MG1655 and W3110.</title>
        <authorList>
            <person name="Hayashi K."/>
            <person name="Morooka N."/>
            <person name="Yamamoto Y."/>
            <person name="Fujita K."/>
            <person name="Isono K."/>
            <person name="Choi S."/>
            <person name="Ohtsubo E."/>
            <person name="Baba T."/>
            <person name="Wanner B.L."/>
            <person name="Mori H."/>
            <person name="Horiuchi T."/>
        </authorList>
    </citation>
    <scope>NUCLEOTIDE SEQUENCE [LARGE SCALE GENOMIC DNA]</scope>
    <source>
        <strain>K12 / W3110 / ATCC 27325 / DSM 5911</strain>
    </source>
</reference>
<reference key="3">
    <citation type="journal article" date="2006" name="J. Bacteriol.">
        <title>Escherichia coli competence gene homologs are essential for competitive fitness and the use of DNA as a nutrient.</title>
        <authorList>
            <person name="Palchevskiy V."/>
            <person name="Finkel S.E."/>
        </authorList>
    </citation>
    <scope>FUNCTION</scope>
    <scope>DISRUPTION PHENOTYPE</scope>
    <source>
        <strain>K12 / W3110 / ZK126</strain>
    </source>
</reference>
<organism>
    <name type="scientific">Escherichia coli (strain K12)</name>
    <dbReference type="NCBI Taxonomy" id="83333"/>
    <lineage>
        <taxon>Bacteria</taxon>
        <taxon>Pseudomonadati</taxon>
        <taxon>Pseudomonadota</taxon>
        <taxon>Gammaproteobacteria</taxon>
        <taxon>Enterobacterales</taxon>
        <taxon>Enterobacteriaceae</taxon>
        <taxon>Escherichia</taxon>
    </lineage>
</organism>
<accession>P64634</accession>
<accession>P45752</accession>
<accession>Q2M759</accession>
<name>HOFN_ECOLI</name>
<comment type="function">
    <text evidence="2">Required for the use of extracellular DNA as a nutrient.</text>
</comment>
<comment type="subcellular location">
    <subcellularLocation>
        <location evidence="3">Cell inner membrane</location>
        <topology evidence="3">Single-pass membrane protein</topology>
    </subcellularLocation>
</comment>
<comment type="disruption phenotype">
    <text evidence="2">Mutants are unable to use DNA as a sole carbon and energy source and show decreased competitive fitness when cocultured with wild-type cells.</text>
</comment>
<keyword id="KW-0997">Cell inner membrane</keyword>
<keyword id="KW-1003">Cell membrane</keyword>
<keyword id="KW-0472">Membrane</keyword>
<keyword id="KW-1185">Reference proteome</keyword>
<keyword id="KW-0812">Transmembrane</keyword>
<keyword id="KW-1133">Transmembrane helix</keyword>
<feature type="chain" id="PRO_0000169539" description="DNA utilization protein HofN">
    <location>
        <begin position="1"/>
        <end position="179"/>
    </location>
</feature>
<feature type="transmembrane region" description="Helical" evidence="1">
    <location>
        <begin position="19"/>
        <end position="39"/>
    </location>
</feature>
<dbReference type="EMBL" id="U18997">
    <property type="protein sequence ID" value="AAA58191.1"/>
    <property type="molecule type" value="Genomic_DNA"/>
</dbReference>
<dbReference type="EMBL" id="U00096">
    <property type="protein sequence ID" value="AAC76419.1"/>
    <property type="molecule type" value="Genomic_DNA"/>
</dbReference>
<dbReference type="EMBL" id="AP009048">
    <property type="protein sequence ID" value="BAE77897.1"/>
    <property type="molecule type" value="Genomic_DNA"/>
</dbReference>
<dbReference type="PIR" id="E65134">
    <property type="entry name" value="E65134"/>
</dbReference>
<dbReference type="RefSeq" id="NP_417853.1">
    <property type="nucleotide sequence ID" value="NC_000913.3"/>
</dbReference>
<dbReference type="RefSeq" id="WP_001069315.1">
    <property type="nucleotide sequence ID" value="NZ_SSZK01000008.1"/>
</dbReference>
<dbReference type="SMR" id="P64634"/>
<dbReference type="BioGRID" id="4263039">
    <property type="interactions" value="7"/>
</dbReference>
<dbReference type="FunCoup" id="P64634">
    <property type="interactions" value="162"/>
</dbReference>
<dbReference type="STRING" id="511145.b3394"/>
<dbReference type="PaxDb" id="511145-b3394"/>
<dbReference type="EnsemblBacteria" id="AAC76419">
    <property type="protein sequence ID" value="AAC76419"/>
    <property type="gene ID" value="b3394"/>
</dbReference>
<dbReference type="GeneID" id="75206332"/>
<dbReference type="GeneID" id="947898"/>
<dbReference type="KEGG" id="ecj:JW3357"/>
<dbReference type="KEGG" id="eco:b3394"/>
<dbReference type="KEGG" id="ecoc:C3026_18415"/>
<dbReference type="PATRIC" id="fig|1411691.4.peg.3336"/>
<dbReference type="EchoBASE" id="EB2760"/>
<dbReference type="eggNOG" id="COG3166">
    <property type="taxonomic scope" value="Bacteria"/>
</dbReference>
<dbReference type="HOGENOM" id="CLU_081304_2_0_6"/>
<dbReference type="InParanoid" id="P64634"/>
<dbReference type="OMA" id="HFTLRIT"/>
<dbReference type="OrthoDB" id="6561867at2"/>
<dbReference type="PhylomeDB" id="P64634"/>
<dbReference type="BioCyc" id="EcoCyc:G7738-MONOMER"/>
<dbReference type="PRO" id="PR:P64634"/>
<dbReference type="Proteomes" id="UP000000625">
    <property type="component" value="Chromosome"/>
</dbReference>
<dbReference type="GO" id="GO:0005886">
    <property type="term" value="C:plasma membrane"/>
    <property type="evidence" value="ECO:0007669"/>
    <property type="project" value="UniProtKB-SubCell"/>
</dbReference>
<dbReference type="GO" id="GO:0015976">
    <property type="term" value="P:carbon utilization"/>
    <property type="evidence" value="ECO:0000315"/>
    <property type="project" value="EcoCyc"/>
</dbReference>
<dbReference type="GO" id="GO:0006308">
    <property type="term" value="P:DNA catabolic process"/>
    <property type="evidence" value="ECO:0000315"/>
    <property type="project" value="EcoCyc"/>
</dbReference>
<dbReference type="InterPro" id="IPR052534">
    <property type="entry name" value="Extracell_DNA_Util/SecSys_Comp"/>
</dbReference>
<dbReference type="InterPro" id="IPR007813">
    <property type="entry name" value="PilN"/>
</dbReference>
<dbReference type="PANTHER" id="PTHR40278">
    <property type="entry name" value="DNA UTILIZATION PROTEIN HOFN"/>
    <property type="match status" value="1"/>
</dbReference>
<dbReference type="PANTHER" id="PTHR40278:SF1">
    <property type="entry name" value="DNA UTILIZATION PROTEIN HOFN"/>
    <property type="match status" value="1"/>
</dbReference>
<dbReference type="Pfam" id="PF05137">
    <property type="entry name" value="PilN"/>
    <property type="match status" value="1"/>
</dbReference>